<dbReference type="EMBL" id="CP001025">
    <property type="protein sequence ID" value="ACB63451.1"/>
    <property type="molecule type" value="Genomic_DNA"/>
</dbReference>
<dbReference type="SMR" id="B1YV68"/>
<dbReference type="KEGG" id="bac:BamMC406_0960"/>
<dbReference type="HOGENOM" id="CLU_106757_1_0_4"/>
<dbReference type="Proteomes" id="UP000001680">
    <property type="component" value="Chromosome 1"/>
</dbReference>
<dbReference type="GO" id="GO:0005829">
    <property type="term" value="C:cytosol"/>
    <property type="evidence" value="ECO:0007669"/>
    <property type="project" value="TreeGrafter"/>
</dbReference>
<dbReference type="GO" id="GO:0043022">
    <property type="term" value="F:ribosome binding"/>
    <property type="evidence" value="ECO:0007669"/>
    <property type="project" value="UniProtKB-UniRule"/>
</dbReference>
<dbReference type="GO" id="GO:0019843">
    <property type="term" value="F:rRNA binding"/>
    <property type="evidence" value="ECO:0007669"/>
    <property type="project" value="UniProtKB-UniRule"/>
</dbReference>
<dbReference type="GO" id="GO:1902626">
    <property type="term" value="P:assembly of large subunit precursor of preribosome"/>
    <property type="evidence" value="ECO:0007669"/>
    <property type="project" value="UniProtKB-UniRule"/>
</dbReference>
<dbReference type="CDD" id="cd16331">
    <property type="entry name" value="YjgA-like"/>
    <property type="match status" value="1"/>
</dbReference>
<dbReference type="Gene3D" id="1.10.60.30">
    <property type="entry name" value="PSPTO4464-like domains"/>
    <property type="match status" value="2"/>
</dbReference>
<dbReference type="HAMAP" id="MF_00765">
    <property type="entry name" value="DarP"/>
    <property type="match status" value="1"/>
</dbReference>
<dbReference type="InterPro" id="IPR006839">
    <property type="entry name" value="DarP"/>
</dbReference>
<dbReference type="InterPro" id="IPR023153">
    <property type="entry name" value="DarP_sf"/>
</dbReference>
<dbReference type="NCBIfam" id="NF003593">
    <property type="entry name" value="PRK05255.1-1"/>
    <property type="match status" value="1"/>
</dbReference>
<dbReference type="PANTHER" id="PTHR38101">
    <property type="entry name" value="UPF0307 PROTEIN YJGA"/>
    <property type="match status" value="1"/>
</dbReference>
<dbReference type="PANTHER" id="PTHR38101:SF1">
    <property type="entry name" value="UPF0307 PROTEIN YJGA"/>
    <property type="match status" value="1"/>
</dbReference>
<dbReference type="Pfam" id="PF04751">
    <property type="entry name" value="DarP"/>
    <property type="match status" value="1"/>
</dbReference>
<dbReference type="PIRSF" id="PIRSF016183">
    <property type="entry name" value="UCP016183"/>
    <property type="match status" value="1"/>
</dbReference>
<dbReference type="SUPFAM" id="SSF158710">
    <property type="entry name" value="PSPTO4464-like"/>
    <property type="match status" value="1"/>
</dbReference>
<keyword id="KW-0963">Cytoplasm</keyword>
<keyword id="KW-0690">Ribosome biogenesis</keyword>
<keyword id="KW-0694">RNA-binding</keyword>
<keyword id="KW-0699">rRNA-binding</keyword>
<reference key="1">
    <citation type="submission" date="2008-04" db="EMBL/GenBank/DDBJ databases">
        <title>Complete sequence of chromosome 1 of Burkholderia ambifaria MC40-6.</title>
        <authorList>
            <person name="Copeland A."/>
            <person name="Lucas S."/>
            <person name="Lapidus A."/>
            <person name="Glavina del Rio T."/>
            <person name="Dalin E."/>
            <person name="Tice H."/>
            <person name="Pitluck S."/>
            <person name="Chain P."/>
            <person name="Malfatti S."/>
            <person name="Shin M."/>
            <person name="Vergez L."/>
            <person name="Lang D."/>
            <person name="Schmutz J."/>
            <person name="Larimer F."/>
            <person name="Land M."/>
            <person name="Hauser L."/>
            <person name="Kyrpides N."/>
            <person name="Lykidis A."/>
            <person name="Ramette A."/>
            <person name="Konstantinidis K."/>
            <person name="Tiedje J."/>
            <person name="Richardson P."/>
        </authorList>
    </citation>
    <scope>NUCLEOTIDE SEQUENCE [LARGE SCALE GENOMIC DNA]</scope>
    <source>
        <strain>MC40-6</strain>
    </source>
</reference>
<evidence type="ECO:0000255" key="1">
    <source>
        <dbReference type="HAMAP-Rule" id="MF_00765"/>
    </source>
</evidence>
<evidence type="ECO:0000256" key="2">
    <source>
        <dbReference type="SAM" id="MobiDB-lite"/>
    </source>
</evidence>
<comment type="function">
    <text evidence="1">Member of a network of 50S ribosomal subunit biogenesis factors which assembles along the 30S-50S interface, preventing incorrect 23S rRNA structures from forming. Promotes peptidyl transferase center (PTC) maturation.</text>
</comment>
<comment type="subcellular location">
    <subcellularLocation>
        <location evidence="1">Cytoplasm</location>
    </subcellularLocation>
    <text evidence="1">Associates with late stage pre-50S ribosomal subunits.</text>
</comment>
<comment type="similarity">
    <text evidence="1">Belongs to the DarP family.</text>
</comment>
<accession>B1YV68</accession>
<name>DARP_BURA4</name>
<feature type="chain" id="PRO_1000148425" description="Dual-action ribosomal maturation protein DarP">
    <location>
        <begin position="1"/>
        <end position="200"/>
    </location>
</feature>
<feature type="region of interest" description="Disordered" evidence="2">
    <location>
        <begin position="1"/>
        <end position="25"/>
    </location>
</feature>
<feature type="region of interest" description="Disordered" evidence="2">
    <location>
        <begin position="177"/>
        <end position="200"/>
    </location>
</feature>
<feature type="compositionally biased region" description="Basic and acidic residues" evidence="2">
    <location>
        <begin position="12"/>
        <end position="25"/>
    </location>
</feature>
<feature type="compositionally biased region" description="Acidic residues" evidence="2">
    <location>
        <begin position="184"/>
        <end position="200"/>
    </location>
</feature>
<proteinExistence type="inferred from homology"/>
<protein>
    <recommendedName>
        <fullName evidence="1">Dual-action ribosomal maturation protein DarP</fullName>
    </recommendedName>
    <alternativeName>
        <fullName evidence="1">Large ribosomal subunit assembly factor DarP</fullName>
    </alternativeName>
</protein>
<sequence>MTRKTRIQPIEHAAEVDDNGYDRPSKSQLKREMHELQVLGQALVDLPKDALKRMPMPESLSDAVREARRITDHEGKRRQLQYVGRVMRTLTDDETAALRTALDAQRGVNKAATARLHWIERTRDQLLANDDALTEFLRQHPDADIQEGRTLIRNARKEAQQGKPPRYFRELFQWIKTASGTPGGDDEAADEAGDDHDDEA</sequence>
<gene>
    <name evidence="1" type="primary">darP</name>
    <name type="ordered locus">BamMC406_0960</name>
</gene>
<organism>
    <name type="scientific">Burkholderia ambifaria (strain MC40-6)</name>
    <dbReference type="NCBI Taxonomy" id="398577"/>
    <lineage>
        <taxon>Bacteria</taxon>
        <taxon>Pseudomonadati</taxon>
        <taxon>Pseudomonadota</taxon>
        <taxon>Betaproteobacteria</taxon>
        <taxon>Burkholderiales</taxon>
        <taxon>Burkholderiaceae</taxon>
        <taxon>Burkholderia</taxon>
        <taxon>Burkholderia cepacia complex</taxon>
    </lineage>
</organism>